<proteinExistence type="inferred from homology"/>
<feature type="chain" id="PRO_0000286261" description="Spermidine/putrescine import ATP-binding protein PotA">
    <location>
        <begin position="1"/>
        <end position="594"/>
    </location>
</feature>
<feature type="domain" description="ABC transporter" evidence="1">
    <location>
        <begin position="24"/>
        <end position="435"/>
    </location>
</feature>
<feature type="region of interest" description="Insert">
    <location>
        <begin position="125"/>
        <end position="304"/>
    </location>
</feature>
<feature type="binding site" evidence="1">
    <location>
        <begin position="57"/>
        <end position="64"/>
    </location>
    <ligand>
        <name>ATP</name>
        <dbReference type="ChEBI" id="CHEBI:30616"/>
    </ligand>
</feature>
<reference key="1">
    <citation type="journal article" date="2002" name="Nucleic Acids Res.">
        <title>The complete genomic sequence of Mycoplasma penetrans, an intracellular bacterial pathogen in humans.</title>
        <authorList>
            <person name="Sasaki Y."/>
            <person name="Ishikawa J."/>
            <person name="Yamashita A."/>
            <person name="Oshima K."/>
            <person name="Kenri T."/>
            <person name="Furuya K."/>
            <person name="Yoshino C."/>
            <person name="Horino A."/>
            <person name="Shiba T."/>
            <person name="Sasaki T."/>
            <person name="Hattori M."/>
        </authorList>
    </citation>
    <scope>NUCLEOTIDE SEQUENCE [LARGE SCALE GENOMIC DNA]</scope>
    <source>
        <strain>HF-2</strain>
    </source>
</reference>
<dbReference type="EC" id="7.6.2.11" evidence="1"/>
<dbReference type="EMBL" id="BA000026">
    <property type="protein sequence ID" value="BAC44649.1"/>
    <property type="molecule type" value="Genomic_DNA"/>
</dbReference>
<dbReference type="RefSeq" id="WP_011077678.1">
    <property type="nucleotide sequence ID" value="NC_004432.1"/>
</dbReference>
<dbReference type="FunCoup" id="Q8EUR3">
    <property type="interactions" value="194"/>
</dbReference>
<dbReference type="STRING" id="272633.gene:10731979"/>
<dbReference type="KEGG" id="mpe:MYPE8570"/>
<dbReference type="eggNOG" id="COG3842">
    <property type="taxonomic scope" value="Bacteria"/>
</dbReference>
<dbReference type="HOGENOM" id="CLU_000604_1_1_14"/>
<dbReference type="InParanoid" id="Q8EUR3"/>
<dbReference type="Proteomes" id="UP000002522">
    <property type="component" value="Chromosome"/>
</dbReference>
<dbReference type="GO" id="GO:0005886">
    <property type="term" value="C:plasma membrane"/>
    <property type="evidence" value="ECO:0007669"/>
    <property type="project" value="UniProtKB-SubCell"/>
</dbReference>
<dbReference type="GO" id="GO:0015417">
    <property type="term" value="F:ABC-type polyamine transporter activity"/>
    <property type="evidence" value="ECO:0007669"/>
    <property type="project" value="UniProtKB-EC"/>
</dbReference>
<dbReference type="GO" id="GO:0005524">
    <property type="term" value="F:ATP binding"/>
    <property type="evidence" value="ECO:0007669"/>
    <property type="project" value="UniProtKB-KW"/>
</dbReference>
<dbReference type="GO" id="GO:0016887">
    <property type="term" value="F:ATP hydrolysis activity"/>
    <property type="evidence" value="ECO:0007669"/>
    <property type="project" value="InterPro"/>
</dbReference>
<dbReference type="Gene3D" id="2.40.50.100">
    <property type="match status" value="1"/>
</dbReference>
<dbReference type="Gene3D" id="3.40.50.300">
    <property type="entry name" value="P-loop containing nucleotide triphosphate hydrolases"/>
    <property type="match status" value="2"/>
</dbReference>
<dbReference type="InterPro" id="IPR003593">
    <property type="entry name" value="AAA+_ATPase"/>
</dbReference>
<dbReference type="InterPro" id="IPR050093">
    <property type="entry name" value="ABC_SmlMolc_Importer"/>
</dbReference>
<dbReference type="InterPro" id="IPR003439">
    <property type="entry name" value="ABC_transporter-like_ATP-bd"/>
</dbReference>
<dbReference type="InterPro" id="IPR017871">
    <property type="entry name" value="ABC_transporter-like_CS"/>
</dbReference>
<dbReference type="InterPro" id="IPR008995">
    <property type="entry name" value="Mo/tungstate-bd_C_term_dom"/>
</dbReference>
<dbReference type="InterPro" id="IPR027417">
    <property type="entry name" value="P-loop_NTPase"/>
</dbReference>
<dbReference type="PANTHER" id="PTHR42781">
    <property type="entry name" value="SPERMIDINE/PUTRESCINE IMPORT ATP-BINDING PROTEIN POTA"/>
    <property type="match status" value="1"/>
</dbReference>
<dbReference type="PANTHER" id="PTHR42781:SF4">
    <property type="entry name" value="SPERMIDINE_PUTRESCINE IMPORT ATP-BINDING PROTEIN POTA"/>
    <property type="match status" value="1"/>
</dbReference>
<dbReference type="Pfam" id="PF00005">
    <property type="entry name" value="ABC_tran"/>
    <property type="match status" value="1"/>
</dbReference>
<dbReference type="SMART" id="SM00382">
    <property type="entry name" value="AAA"/>
    <property type="match status" value="1"/>
</dbReference>
<dbReference type="SUPFAM" id="SSF50331">
    <property type="entry name" value="MOP-like"/>
    <property type="match status" value="1"/>
</dbReference>
<dbReference type="SUPFAM" id="SSF52540">
    <property type="entry name" value="P-loop containing nucleoside triphosphate hydrolases"/>
    <property type="match status" value="1"/>
</dbReference>
<dbReference type="PROSITE" id="PS00211">
    <property type="entry name" value="ABC_TRANSPORTER_1"/>
    <property type="match status" value="1"/>
</dbReference>
<dbReference type="PROSITE" id="PS50893">
    <property type="entry name" value="ABC_TRANSPORTER_2"/>
    <property type="match status" value="1"/>
</dbReference>
<dbReference type="PROSITE" id="PS51305">
    <property type="entry name" value="POTA"/>
    <property type="match status" value="1"/>
</dbReference>
<evidence type="ECO:0000255" key="1">
    <source>
        <dbReference type="HAMAP-Rule" id="MF_01726"/>
    </source>
</evidence>
<gene>
    <name evidence="1" type="primary">potA</name>
    <name type="ordered locus">MYPE8570</name>
</gene>
<accession>Q8EUR3</accession>
<keyword id="KW-0067">ATP-binding</keyword>
<keyword id="KW-1003">Cell membrane</keyword>
<keyword id="KW-0472">Membrane</keyword>
<keyword id="KW-0547">Nucleotide-binding</keyword>
<keyword id="KW-1185">Reference proteome</keyword>
<keyword id="KW-1278">Translocase</keyword>
<keyword id="KW-0813">Transport</keyword>
<sequence length="594" mass="69136">MKTKDNEVINSESEFSEKDVPNFIEIKKINKTYPDGYVAVKNINFEIKKGEFVTILGPSGCGKTTILKMIGGFELPTSGKILVNKIDIKDLPIQRRPTATVFQDYALFPNMNVEKNIAYGLTEIRKPIENVSADYQKESEKYFNDCLKKSKSKIKDIERKRDGFLKDIQKLENKINNSKILSEVNTMTEEEYEEKIETLEKEYFEKNKKELHKSIPVKVKFIEFINNTLSFFRINKNIDFKANETDELVQTYLKYEKAYRVNLITKQEIDYLNHKAADLDYWVSYWQNYPYQEKEWFDKKKLTRKLTKQEIKEEVQQIIKIIGLEGKEKKWPSDLSGGMQQRVALARALVIKPETLLLDEPLSALDAKVRAQMQQELKNLHKKFGITFILVTHDQEEALTLSDKIIVMSQGKIQQIGTPNEIYDLPANNWVANFIGKANILNATYLKGNKIKLFDNVLNADSRYKDKFKENEEVNVMIRPEDFDVVGKDKGKIKVTVLETTYKGLMWELICEFEGVLLTLEAVNKVNLEQEIYLTWDDEDMHIMKKDDENDTYTDESSEFLALTKNAFKKKIKEIKSKKNKNKVNGKKGDKNDN</sequence>
<organism>
    <name type="scientific">Malacoplasma penetrans (strain HF-2)</name>
    <name type="common">Mycoplasma penetrans</name>
    <dbReference type="NCBI Taxonomy" id="272633"/>
    <lineage>
        <taxon>Bacteria</taxon>
        <taxon>Bacillati</taxon>
        <taxon>Mycoplasmatota</taxon>
        <taxon>Mycoplasmoidales</taxon>
        <taxon>Mycoplasmoidaceae</taxon>
        <taxon>Malacoplasma</taxon>
    </lineage>
</organism>
<name>POTA_MALP2</name>
<comment type="function">
    <text evidence="1">Part of the ABC transporter complex PotABCD involved in spermidine/putrescine import. Responsible for energy coupling to the transport system.</text>
</comment>
<comment type="catalytic activity">
    <reaction evidence="1">
        <text>ATP + H2O + polyamine-[polyamine-binding protein]Side 1 = ADP + phosphate + polyamineSide 2 + [polyamine-binding protein]Side 1.</text>
        <dbReference type="EC" id="7.6.2.11"/>
    </reaction>
</comment>
<comment type="subunit">
    <text evidence="1">The complex is composed of two ATP-binding proteins (PotA), two transmembrane proteins (PotB and PotC) and a solute-binding protein (PotD).</text>
</comment>
<comment type="subcellular location">
    <subcellularLocation>
        <location evidence="1">Cell membrane</location>
        <topology evidence="1">Peripheral membrane protein</topology>
    </subcellularLocation>
</comment>
<comment type="similarity">
    <text evidence="1">Belongs to the ABC transporter superfamily. Spermidine/putrescine importer (TC 3.A.1.11.1) family.</text>
</comment>
<protein>
    <recommendedName>
        <fullName evidence="1">Spermidine/putrescine import ATP-binding protein PotA</fullName>
        <ecNumber evidence="1">7.6.2.11</ecNumber>
    </recommendedName>
</protein>